<name>YNAB_BACSU</name>
<accession>P94480</accession>
<comment type="sequence caution" evidence="1">
    <conflict type="frameshift">
        <sequence resource="EMBL-CDS" id="AAB41082"/>
    </conflict>
</comment>
<dbReference type="EMBL" id="U66480">
    <property type="protein sequence ID" value="AAB41082.1"/>
    <property type="status" value="ALT_FRAME"/>
    <property type="molecule type" value="Genomic_DNA"/>
</dbReference>
<dbReference type="EMBL" id="AL009126">
    <property type="protein sequence ID" value="CAB13634.2"/>
    <property type="molecule type" value="Genomic_DNA"/>
</dbReference>
<dbReference type="PIR" id="B69887">
    <property type="entry name" value="B69887"/>
</dbReference>
<dbReference type="RefSeq" id="NP_389632.2">
    <property type="nucleotide sequence ID" value="NC_000964.3"/>
</dbReference>
<dbReference type="RefSeq" id="WP_003245860.1">
    <property type="nucleotide sequence ID" value="NZ_OZ025638.1"/>
</dbReference>
<dbReference type="SMR" id="P94480"/>
<dbReference type="FunCoup" id="P94480">
    <property type="interactions" value="13"/>
</dbReference>
<dbReference type="STRING" id="224308.BSU17500"/>
<dbReference type="PaxDb" id="224308-BSU17500"/>
<dbReference type="EnsemblBacteria" id="CAB13634">
    <property type="protein sequence ID" value="CAB13634"/>
    <property type="gene ID" value="BSU_17500"/>
</dbReference>
<dbReference type="GeneID" id="940017"/>
<dbReference type="KEGG" id="bsu:BSU17500"/>
<dbReference type="PATRIC" id="fig|224308.43.peg.1848"/>
<dbReference type="eggNOG" id="COG4282">
    <property type="taxonomic scope" value="Bacteria"/>
</dbReference>
<dbReference type="InParanoid" id="P94480"/>
<dbReference type="OrthoDB" id="2355620at2"/>
<dbReference type="BioCyc" id="BSUB:BSU17500-MONOMER"/>
<dbReference type="Proteomes" id="UP000001570">
    <property type="component" value="Chromosome"/>
</dbReference>
<dbReference type="Gene3D" id="3.40.1580.10">
    <property type="entry name" value="SMI1/KNR4-like"/>
    <property type="match status" value="1"/>
</dbReference>
<dbReference type="InterPro" id="IPR018958">
    <property type="entry name" value="Knr4/Smi1-like_dom"/>
</dbReference>
<dbReference type="InterPro" id="IPR037883">
    <property type="entry name" value="Knr4/Smi1-like_sf"/>
</dbReference>
<dbReference type="Pfam" id="PF09346">
    <property type="entry name" value="SMI1_KNR4"/>
    <property type="match status" value="1"/>
</dbReference>
<dbReference type="SMART" id="SM00860">
    <property type="entry name" value="SMI1_KNR4"/>
    <property type="match status" value="1"/>
</dbReference>
<dbReference type="SUPFAM" id="SSF160631">
    <property type="entry name" value="SMI1/KNR4-like"/>
    <property type="match status" value="1"/>
</dbReference>
<keyword id="KW-1185">Reference proteome</keyword>
<feature type="chain" id="PRO_0000049638" description="Uncharacterized protein YnaB">
    <location>
        <begin position="1"/>
        <end position="144"/>
    </location>
</feature>
<feature type="sequence conflict" description="In Ref. 1; AAB41082." evidence="1" ref="1">
    <original>P</original>
    <variation>PTFP</variation>
    <location>
        <position position="29"/>
    </location>
</feature>
<gene>
    <name type="primary">ynaB</name>
    <name type="ordered locus">BSU17500</name>
</gene>
<protein>
    <recommendedName>
        <fullName>Uncharacterized protein YnaB</fullName>
    </recommendedName>
</protein>
<proteinExistence type="predicted"/>
<sequence length="144" mass="16804">MEDATFHFKDPASPQEISDIEQKLGVTFPNDYKEFLLQHNGMEMFDGIEILSLEGIIEYNEVQDFPEGYVLIGYHFDGRYVIDTNKSKNGLGYMLYLDSIDDIEDAINLDSNFEIWFDMLVSLNGTKYWEVNPNLQEYYKLVSE</sequence>
<reference key="1">
    <citation type="submission" date="1997-02" db="EMBL/GenBank/DDBJ databases">
        <title>Sequencing of a 26 kb region of the Bacillus subtilis genome downstream of spoVJ.</title>
        <authorList>
            <person name="Borchert S."/>
            <person name="Klein C."/>
            <person name="Piksa B."/>
            <person name="Hammelmann M."/>
            <person name="Entian K.-D."/>
        </authorList>
    </citation>
    <scope>NUCLEOTIDE SEQUENCE [GENOMIC DNA]</scope>
</reference>
<reference key="2">
    <citation type="journal article" date="1997" name="Nature">
        <title>The complete genome sequence of the Gram-positive bacterium Bacillus subtilis.</title>
        <authorList>
            <person name="Kunst F."/>
            <person name="Ogasawara N."/>
            <person name="Moszer I."/>
            <person name="Albertini A.M."/>
            <person name="Alloni G."/>
            <person name="Azevedo V."/>
            <person name="Bertero M.G."/>
            <person name="Bessieres P."/>
            <person name="Bolotin A."/>
            <person name="Borchert S."/>
            <person name="Borriss R."/>
            <person name="Boursier L."/>
            <person name="Brans A."/>
            <person name="Braun M."/>
            <person name="Brignell S.C."/>
            <person name="Bron S."/>
            <person name="Brouillet S."/>
            <person name="Bruschi C.V."/>
            <person name="Caldwell B."/>
            <person name="Capuano V."/>
            <person name="Carter N.M."/>
            <person name="Choi S.-K."/>
            <person name="Codani J.-J."/>
            <person name="Connerton I.F."/>
            <person name="Cummings N.J."/>
            <person name="Daniel R.A."/>
            <person name="Denizot F."/>
            <person name="Devine K.M."/>
            <person name="Duesterhoeft A."/>
            <person name="Ehrlich S.D."/>
            <person name="Emmerson P.T."/>
            <person name="Entian K.-D."/>
            <person name="Errington J."/>
            <person name="Fabret C."/>
            <person name="Ferrari E."/>
            <person name="Foulger D."/>
            <person name="Fritz C."/>
            <person name="Fujita M."/>
            <person name="Fujita Y."/>
            <person name="Fuma S."/>
            <person name="Galizzi A."/>
            <person name="Galleron N."/>
            <person name="Ghim S.-Y."/>
            <person name="Glaser P."/>
            <person name="Goffeau A."/>
            <person name="Golightly E.J."/>
            <person name="Grandi G."/>
            <person name="Guiseppi G."/>
            <person name="Guy B.J."/>
            <person name="Haga K."/>
            <person name="Haiech J."/>
            <person name="Harwood C.R."/>
            <person name="Henaut A."/>
            <person name="Hilbert H."/>
            <person name="Holsappel S."/>
            <person name="Hosono S."/>
            <person name="Hullo M.-F."/>
            <person name="Itaya M."/>
            <person name="Jones L.-M."/>
            <person name="Joris B."/>
            <person name="Karamata D."/>
            <person name="Kasahara Y."/>
            <person name="Klaerr-Blanchard M."/>
            <person name="Klein C."/>
            <person name="Kobayashi Y."/>
            <person name="Koetter P."/>
            <person name="Koningstein G."/>
            <person name="Krogh S."/>
            <person name="Kumano M."/>
            <person name="Kurita K."/>
            <person name="Lapidus A."/>
            <person name="Lardinois S."/>
            <person name="Lauber J."/>
            <person name="Lazarevic V."/>
            <person name="Lee S.-M."/>
            <person name="Levine A."/>
            <person name="Liu H."/>
            <person name="Masuda S."/>
            <person name="Mauel C."/>
            <person name="Medigue C."/>
            <person name="Medina N."/>
            <person name="Mellado R.P."/>
            <person name="Mizuno M."/>
            <person name="Moestl D."/>
            <person name="Nakai S."/>
            <person name="Noback M."/>
            <person name="Noone D."/>
            <person name="O'Reilly M."/>
            <person name="Ogawa K."/>
            <person name="Ogiwara A."/>
            <person name="Oudega B."/>
            <person name="Park S.-H."/>
            <person name="Parro V."/>
            <person name="Pohl T.M."/>
            <person name="Portetelle D."/>
            <person name="Porwollik S."/>
            <person name="Prescott A.M."/>
            <person name="Presecan E."/>
            <person name="Pujic P."/>
            <person name="Purnelle B."/>
            <person name="Rapoport G."/>
            <person name="Rey M."/>
            <person name="Reynolds S."/>
            <person name="Rieger M."/>
            <person name="Rivolta C."/>
            <person name="Rocha E."/>
            <person name="Roche B."/>
            <person name="Rose M."/>
            <person name="Sadaie Y."/>
            <person name="Sato T."/>
            <person name="Scanlan E."/>
            <person name="Schleich S."/>
            <person name="Schroeter R."/>
            <person name="Scoffone F."/>
            <person name="Sekiguchi J."/>
            <person name="Sekowska A."/>
            <person name="Seror S.J."/>
            <person name="Serror P."/>
            <person name="Shin B.-S."/>
            <person name="Soldo B."/>
            <person name="Sorokin A."/>
            <person name="Tacconi E."/>
            <person name="Takagi T."/>
            <person name="Takahashi H."/>
            <person name="Takemaru K."/>
            <person name="Takeuchi M."/>
            <person name="Tamakoshi A."/>
            <person name="Tanaka T."/>
            <person name="Terpstra P."/>
            <person name="Tognoni A."/>
            <person name="Tosato V."/>
            <person name="Uchiyama S."/>
            <person name="Vandenbol M."/>
            <person name="Vannier F."/>
            <person name="Vassarotti A."/>
            <person name="Viari A."/>
            <person name="Wambutt R."/>
            <person name="Wedler E."/>
            <person name="Wedler H."/>
            <person name="Weitzenegger T."/>
            <person name="Winters P."/>
            <person name="Wipat A."/>
            <person name="Yamamoto H."/>
            <person name="Yamane K."/>
            <person name="Yasumoto K."/>
            <person name="Yata K."/>
            <person name="Yoshida K."/>
            <person name="Yoshikawa H.-F."/>
            <person name="Zumstein E."/>
            <person name="Yoshikawa H."/>
            <person name="Danchin A."/>
        </authorList>
    </citation>
    <scope>NUCLEOTIDE SEQUENCE [LARGE SCALE GENOMIC DNA]</scope>
    <source>
        <strain>168</strain>
    </source>
</reference>
<reference key="3">
    <citation type="journal article" date="2009" name="Microbiology">
        <title>From a consortium sequence to a unified sequence: the Bacillus subtilis 168 reference genome a decade later.</title>
        <authorList>
            <person name="Barbe V."/>
            <person name="Cruveiller S."/>
            <person name="Kunst F."/>
            <person name="Lenoble P."/>
            <person name="Meurice G."/>
            <person name="Sekowska A."/>
            <person name="Vallenet D."/>
            <person name="Wang T."/>
            <person name="Moszer I."/>
            <person name="Medigue C."/>
            <person name="Danchin A."/>
        </authorList>
    </citation>
    <scope>SEQUENCE REVISION TO N-TERMINUS</scope>
</reference>
<evidence type="ECO:0000305" key="1"/>
<organism>
    <name type="scientific">Bacillus subtilis (strain 168)</name>
    <dbReference type="NCBI Taxonomy" id="224308"/>
    <lineage>
        <taxon>Bacteria</taxon>
        <taxon>Bacillati</taxon>
        <taxon>Bacillota</taxon>
        <taxon>Bacilli</taxon>
        <taxon>Bacillales</taxon>
        <taxon>Bacillaceae</taxon>
        <taxon>Bacillus</taxon>
    </lineage>
</organism>